<feature type="chain" id="PRO_0000159224" description="F420-dependent formate dehydrogenase subunit beta">
    <location>
        <begin position="1"/>
        <end position="379"/>
    </location>
</feature>
<feature type="domain" description="4Fe-4S ferredoxin-type 1" evidence="2">
    <location>
        <begin position="271"/>
        <end position="301"/>
    </location>
</feature>
<feature type="domain" description="4Fe-4S ferredoxin-type 2" evidence="2">
    <location>
        <begin position="321"/>
        <end position="351"/>
    </location>
</feature>
<feature type="binding site" evidence="2">
    <location>
        <position position="280"/>
    </location>
    <ligand>
        <name>[4Fe-4S] cluster</name>
        <dbReference type="ChEBI" id="CHEBI:49883"/>
        <label>1</label>
    </ligand>
</feature>
<feature type="binding site" evidence="2">
    <location>
        <position position="283"/>
    </location>
    <ligand>
        <name>[4Fe-4S] cluster</name>
        <dbReference type="ChEBI" id="CHEBI:49883"/>
        <label>1</label>
    </ligand>
</feature>
<feature type="binding site" evidence="2">
    <location>
        <position position="286"/>
    </location>
    <ligand>
        <name>[4Fe-4S] cluster</name>
        <dbReference type="ChEBI" id="CHEBI:49883"/>
        <label>1</label>
    </ligand>
</feature>
<feature type="binding site" evidence="2">
    <location>
        <position position="290"/>
    </location>
    <ligand>
        <name>[4Fe-4S] cluster</name>
        <dbReference type="ChEBI" id="CHEBI:49883"/>
        <label>2</label>
    </ligand>
</feature>
<feature type="binding site" evidence="2">
    <location>
        <position position="330"/>
    </location>
    <ligand>
        <name>[4Fe-4S] cluster</name>
        <dbReference type="ChEBI" id="CHEBI:49883"/>
        <label>2</label>
    </ligand>
</feature>
<feature type="binding site" evidence="2">
    <location>
        <position position="333"/>
    </location>
    <ligand>
        <name>[4Fe-4S] cluster</name>
        <dbReference type="ChEBI" id="CHEBI:49883"/>
        <label>2</label>
    </ligand>
</feature>
<feature type="binding site" evidence="2">
    <location>
        <position position="336"/>
    </location>
    <ligand>
        <name>[4Fe-4S] cluster</name>
        <dbReference type="ChEBI" id="CHEBI:49883"/>
        <label>2</label>
    </ligand>
</feature>
<feature type="binding site" evidence="2">
    <location>
        <position position="340"/>
    </location>
    <ligand>
        <name>[4Fe-4S] cluster</name>
        <dbReference type="ChEBI" id="CHEBI:49883"/>
        <label>1</label>
    </ligand>
</feature>
<sequence>MKYVLIQATDNGILRRAECGGAVTALFKYLLDKKLVDGVLALKRGEDVYDGIPTFITNSNELVETAGSLHCAPTNFGKLIAKYLADKKIAVPAKPCDAMAIRELAKLNQINLDNVYMIGLNCGGTISPITAMKMIELFYEVNPLDVVKEEIDKGKFIIELKNGEHKAVKIEELEEKGFGRRKNCQRCEIMIPRMADLACGNWGAEKGWTFVEICSERGRKLVEDAEKDGYIKIKQPSEKAIQVREKIESIMIKLAKKFQKKHLEEEYPSLEKWKKYWNRCIKCYGCRDNCPLCFCVECSLEKDYIEEKGKIPPNPLIFQGIRLSHISQSCINCGQCEDACPMDIPLAYIFHRMQLKIRDTLGYIPGVDNSLPPLFNIER</sequence>
<dbReference type="EC" id="1.17.98.3" evidence="1"/>
<dbReference type="EMBL" id="L77117">
    <property type="protein sequence ID" value="AAB97986.1"/>
    <property type="molecule type" value="Genomic_DNA"/>
</dbReference>
<dbReference type="PIR" id="E64300">
    <property type="entry name" value="E64300"/>
</dbReference>
<dbReference type="RefSeq" id="WP_010869498.1">
    <property type="nucleotide sequence ID" value="NC_000909.1"/>
</dbReference>
<dbReference type="SMR" id="Q60316"/>
<dbReference type="FunCoup" id="Q60316">
    <property type="interactions" value="91"/>
</dbReference>
<dbReference type="STRING" id="243232.MJ_0005"/>
<dbReference type="PaxDb" id="243232-MJ_0005"/>
<dbReference type="EnsemblBacteria" id="AAB97986">
    <property type="protein sequence ID" value="AAB97986"/>
    <property type="gene ID" value="MJ_0005"/>
</dbReference>
<dbReference type="GeneID" id="1450844"/>
<dbReference type="KEGG" id="mja:MJ_0005"/>
<dbReference type="eggNOG" id="arCOG02653">
    <property type="taxonomic scope" value="Archaea"/>
</dbReference>
<dbReference type="HOGENOM" id="CLU_063409_0_0_2"/>
<dbReference type="InParanoid" id="Q60316"/>
<dbReference type="OrthoDB" id="35334at2157"/>
<dbReference type="PhylomeDB" id="Q60316"/>
<dbReference type="Proteomes" id="UP000000805">
    <property type="component" value="Chromosome"/>
</dbReference>
<dbReference type="GO" id="GO:0051539">
    <property type="term" value="F:4 iron, 4 sulfur cluster binding"/>
    <property type="evidence" value="ECO:0007669"/>
    <property type="project" value="UniProtKB-KW"/>
</dbReference>
<dbReference type="GO" id="GO:0043794">
    <property type="term" value="F:formate dehydrogenase (coenzyme F420) activity"/>
    <property type="evidence" value="ECO:0007669"/>
    <property type="project" value="RHEA"/>
</dbReference>
<dbReference type="GO" id="GO:0008863">
    <property type="term" value="F:formate dehydrogenase (NAD+) activity"/>
    <property type="evidence" value="ECO:0007669"/>
    <property type="project" value="UniProtKB-EC"/>
</dbReference>
<dbReference type="GO" id="GO:0046872">
    <property type="term" value="F:metal ion binding"/>
    <property type="evidence" value="ECO:0007669"/>
    <property type="project" value="UniProtKB-KW"/>
</dbReference>
<dbReference type="GO" id="GO:0052592">
    <property type="term" value="F:oxidoreductase activity, acting on CH or CH2 groups, with an iron-sulfur protein as acceptor"/>
    <property type="evidence" value="ECO:0000318"/>
    <property type="project" value="GO_Central"/>
</dbReference>
<dbReference type="Gene3D" id="1.10.1060.10">
    <property type="entry name" value="Alpha-helical ferredoxin"/>
    <property type="match status" value="1"/>
</dbReference>
<dbReference type="InterPro" id="IPR017896">
    <property type="entry name" value="4Fe4S_Fe-S-bd"/>
</dbReference>
<dbReference type="InterPro" id="IPR017900">
    <property type="entry name" value="4Fe4S_Fe_S_CS"/>
</dbReference>
<dbReference type="InterPro" id="IPR007516">
    <property type="entry name" value="Co_F420_Hydgase/DH_bsu_N"/>
</dbReference>
<dbReference type="InterPro" id="IPR045220">
    <property type="entry name" value="FRHB/FDHB/HCAR-like"/>
</dbReference>
<dbReference type="InterPro" id="IPR007525">
    <property type="entry name" value="FrhB_FdhB_C"/>
</dbReference>
<dbReference type="InterPro" id="IPR009051">
    <property type="entry name" value="Helical_ferredxn"/>
</dbReference>
<dbReference type="PANTHER" id="PTHR31332">
    <property type="entry name" value="7-HYDROXYMETHYL CHLOROPHYLL A REDUCTASE, CHLOROPLASTIC"/>
    <property type="match status" value="1"/>
</dbReference>
<dbReference type="PANTHER" id="PTHR31332:SF6">
    <property type="entry name" value="FORMATE DEHYDROGENASE SUBUNIT BETA"/>
    <property type="match status" value="1"/>
</dbReference>
<dbReference type="Pfam" id="PF00037">
    <property type="entry name" value="Fer4"/>
    <property type="match status" value="1"/>
</dbReference>
<dbReference type="Pfam" id="PF04432">
    <property type="entry name" value="FrhB_FdhB_C"/>
    <property type="match status" value="1"/>
</dbReference>
<dbReference type="Pfam" id="PF04422">
    <property type="entry name" value="FrhB_FdhB_N"/>
    <property type="match status" value="1"/>
</dbReference>
<dbReference type="SUPFAM" id="SSF46548">
    <property type="entry name" value="alpha-helical ferredoxin"/>
    <property type="match status" value="1"/>
</dbReference>
<dbReference type="PROSITE" id="PS00198">
    <property type="entry name" value="4FE4S_FER_1"/>
    <property type="match status" value="2"/>
</dbReference>
<dbReference type="PROSITE" id="PS51379">
    <property type="entry name" value="4FE4S_FER_2"/>
    <property type="match status" value="2"/>
</dbReference>
<accession>Q60316</accession>
<keyword id="KW-0004">4Fe-4S</keyword>
<keyword id="KW-0249">Electron transport</keyword>
<keyword id="KW-0274">FAD</keyword>
<keyword id="KW-0285">Flavoprotein</keyword>
<keyword id="KW-0408">Iron</keyword>
<keyword id="KW-0411">Iron-sulfur</keyword>
<keyword id="KW-0479">Metal-binding</keyword>
<keyword id="KW-0560">Oxidoreductase</keyword>
<keyword id="KW-1185">Reference proteome</keyword>
<keyword id="KW-0677">Repeat</keyword>
<keyword id="KW-0813">Transport</keyword>
<keyword id="KW-0862">Zinc</keyword>
<organism>
    <name type="scientific">Methanocaldococcus jannaschii (strain ATCC 43067 / DSM 2661 / JAL-1 / JCM 10045 / NBRC 100440)</name>
    <name type="common">Methanococcus jannaschii</name>
    <dbReference type="NCBI Taxonomy" id="243232"/>
    <lineage>
        <taxon>Archaea</taxon>
        <taxon>Methanobacteriati</taxon>
        <taxon>Methanobacteriota</taxon>
        <taxon>Methanomada group</taxon>
        <taxon>Methanococci</taxon>
        <taxon>Methanococcales</taxon>
        <taxon>Methanocaldococcaceae</taxon>
        <taxon>Methanocaldococcus</taxon>
    </lineage>
</organism>
<reference key="1">
    <citation type="journal article" date="1996" name="Science">
        <title>Complete genome sequence of the methanogenic archaeon, Methanococcus jannaschii.</title>
        <authorList>
            <person name="Bult C.J."/>
            <person name="White O."/>
            <person name="Olsen G.J."/>
            <person name="Zhou L."/>
            <person name="Fleischmann R.D."/>
            <person name="Sutton G.G."/>
            <person name="Blake J.A."/>
            <person name="FitzGerald L.M."/>
            <person name="Clayton R.A."/>
            <person name="Gocayne J.D."/>
            <person name="Kerlavage A.R."/>
            <person name="Dougherty B.A."/>
            <person name="Tomb J.-F."/>
            <person name="Adams M.D."/>
            <person name="Reich C.I."/>
            <person name="Overbeek R."/>
            <person name="Kirkness E.F."/>
            <person name="Weinstock K.G."/>
            <person name="Merrick J.M."/>
            <person name="Glodek A."/>
            <person name="Scott J.L."/>
            <person name="Geoghagen N.S.M."/>
            <person name="Weidman J.F."/>
            <person name="Fuhrmann J.L."/>
            <person name="Nguyen D."/>
            <person name="Utterback T.R."/>
            <person name="Kelley J.M."/>
            <person name="Peterson J.D."/>
            <person name="Sadow P.W."/>
            <person name="Hanna M.C."/>
            <person name="Cotton M.D."/>
            <person name="Roberts K.M."/>
            <person name="Hurst M.A."/>
            <person name="Kaine B.P."/>
            <person name="Borodovsky M."/>
            <person name="Klenk H.-P."/>
            <person name="Fraser C.M."/>
            <person name="Smith H.O."/>
            <person name="Woese C.R."/>
            <person name="Venter J.C."/>
        </authorList>
    </citation>
    <scope>NUCLEOTIDE SEQUENCE [LARGE SCALE GENOMIC DNA]</scope>
    <source>
        <strain>ATCC 43067 / DSM 2661 / JAL-1 / JCM 10045 / NBRC 100440</strain>
    </source>
</reference>
<gene>
    <name type="primary">fdhB</name>
    <name type="ordered locus">MJ0005</name>
</gene>
<comment type="function">
    <text evidence="1">Catalyzes the oxidation of formate to carbon dioxide, with coenzyme F420 as the electron acceptor.</text>
</comment>
<comment type="catalytic activity">
    <reaction evidence="1">
        <text>oxidized coenzyme F420-(gamma-L-Glu)(n) + formate + 2 H(+) = reduced coenzyme F420-(gamma-L-Glu)(n) + CO2</text>
        <dbReference type="Rhea" id="RHEA:42764"/>
        <dbReference type="Rhea" id="RHEA-COMP:12939"/>
        <dbReference type="Rhea" id="RHEA-COMP:14378"/>
        <dbReference type="ChEBI" id="CHEBI:15378"/>
        <dbReference type="ChEBI" id="CHEBI:15740"/>
        <dbReference type="ChEBI" id="CHEBI:16526"/>
        <dbReference type="ChEBI" id="CHEBI:133980"/>
        <dbReference type="ChEBI" id="CHEBI:139511"/>
        <dbReference type="EC" id="1.17.98.3"/>
    </reaction>
</comment>
<comment type="cofactor">
    <cofactor evidence="2">
        <name>[4Fe-4S] cluster</name>
        <dbReference type="ChEBI" id="CHEBI:49883"/>
    </cofactor>
    <text evidence="2">Binds 2 [4Fe-4S] clusters.</text>
</comment>
<comment type="cofactor">
    <cofactor evidence="1">
        <name>FAD</name>
        <dbReference type="ChEBI" id="CHEBI:57692"/>
    </cofactor>
</comment>
<comment type="cofactor">
    <cofactor evidence="1">
        <name>Zn(2+)</name>
        <dbReference type="ChEBI" id="CHEBI:29105"/>
    </cofactor>
</comment>
<comment type="subunit">
    <text evidence="1">Dimer of an alpha (FdhA) and a beta (FdhB) subunit.</text>
</comment>
<comment type="similarity">
    <text evidence="3">Belongs to the FrhB family.</text>
</comment>
<proteinExistence type="inferred from homology"/>
<name>FDHB_METJA</name>
<protein>
    <recommendedName>
        <fullName evidence="1">F420-dependent formate dehydrogenase subunit beta</fullName>
        <ecNumber evidence="1">1.17.98.3</ecNumber>
    </recommendedName>
</protein>
<evidence type="ECO:0000250" key="1">
    <source>
        <dbReference type="UniProtKB" id="P06130"/>
    </source>
</evidence>
<evidence type="ECO:0000255" key="2">
    <source>
        <dbReference type="PROSITE-ProRule" id="PRU00711"/>
    </source>
</evidence>
<evidence type="ECO:0000305" key="3"/>